<keyword id="KW-0131">Cell cycle</keyword>
<keyword id="KW-0132">Cell division</keyword>
<keyword id="KW-0137">Centromere</keyword>
<keyword id="KW-0158">Chromosome</keyword>
<keyword id="KW-0159">Chromosome partition</keyword>
<keyword id="KW-0175">Coiled coil</keyword>
<keyword id="KW-0963">Cytoplasm</keyword>
<keyword id="KW-0206">Cytoskeleton</keyword>
<keyword id="KW-0995">Kinetochore</keyword>
<keyword id="KW-0498">Mitosis</keyword>
<keyword id="KW-1185">Reference proteome</keyword>
<protein>
    <recommendedName>
        <fullName evidence="7">Spindly-like protein spdl-1</fullName>
    </recommendedName>
</protein>
<proteinExistence type="evidence at protein level"/>
<reference evidence="8" key="1">
    <citation type="journal article" date="1998" name="Science">
        <title>Genome sequence of the nematode C. elegans: a platform for investigating biology.</title>
        <authorList>
            <consortium name="The C. elegans sequencing consortium"/>
        </authorList>
    </citation>
    <scope>NUCLEOTIDE SEQUENCE [LARGE SCALE GENOMIC DNA]</scope>
    <source>
        <strain evidence="8">Bristol N2</strain>
    </source>
</reference>
<reference evidence="7" key="2">
    <citation type="journal article" date="2008" name="Genes Dev.">
        <title>A new mechanism controlling kinetochore-microtubule interactions revealed by comparison of two dynein-targeting components: SPDL-1 and the Rod/Zwilch/Zw10 complex.</title>
        <authorList>
            <person name="Gassmann R."/>
            <person name="Essex A."/>
            <person name="Hu J.-S."/>
            <person name="Maddox P.S."/>
            <person name="Motegi F."/>
            <person name="Sugimoto A."/>
            <person name="O'Rourke S.M."/>
            <person name="Bowerman B."/>
            <person name="McLeod I."/>
            <person name="Yates J.R. III"/>
            <person name="Oegema K."/>
            <person name="Cheeseman I.M."/>
            <person name="Desai A."/>
        </authorList>
    </citation>
    <scope>FUNCTION</scope>
    <scope>INTERACTION WITH ZWL-1</scope>
    <scope>SUBCELLULAR LOCATION</scope>
    <scope>DISRUPTION PHENOTYPE</scope>
</reference>
<reference evidence="7" key="3">
    <citation type="journal article" date="2008" name="J. Cell Biol.">
        <title>SPDL-1 functions as a kinetochore receptor for MDF-1 in Caenorhabditis elegans.</title>
        <authorList>
            <person name="Yamamoto T.G."/>
            <person name="Watanabe S."/>
            <person name="Essex A."/>
            <person name="Kitagawa R."/>
        </authorList>
    </citation>
    <scope>FUNCTION</scope>
    <scope>INTERACTION WITH MDF-1 AND MDF-2</scope>
    <scope>SUBCELLULAR LOCATION</scope>
    <scope>DISRUPTION PHENOTYPE</scope>
</reference>
<reference evidence="7" key="4">
    <citation type="journal article" date="2013" name="Science">
        <title>Crosstalk between microtubule attachment complexes ensures accurate chromosome segregation.</title>
        <authorList>
            <person name="Cheerambathur D.K."/>
            <person name="Gassmann R."/>
            <person name="Cook B."/>
            <person name="Oegema K."/>
            <person name="Desai A."/>
        </authorList>
    </citation>
    <scope>FUNCTION</scope>
    <scope>DISRUPTION PHENOTYPE</scope>
    <scope>MUTAGENESIS OF PHE-199</scope>
</reference>
<sequence>MPDDEEKLQLLADVERLKKILRQKDEMLEEMEDDLKNQGKPCSSKLSLEERAQELSEQLRDLHVEMDGKNATILDRDALIDSLRSEIDKLEKINKEFANGSVIPEHDDSNSFGESEMLRISEDCQKYKETATALYERNAELEKEAVNLKDEIESMMDHIRDLKNHMETRDEEIARLEGELFDERNSHEGKLAARGNSMFSEVIDAERKVEEDLKVLHGENRALKGMVKRLRMEVEEVEERLRSSTKRFNVTRMTTSDIDVKEMRRLRDRVCHLETERVHLWERMFIKMRSIPKREVGALITGYFKSFELSIASVKGGFDGLMKDNEKYVTIIRGLQQEVENLKADIVQLQFDNKCAHRKAAPVVNKDFEHPLLAAPLKTLNNGRPSFFIKPKNVEPMPQLGHSLSSIAVTPQKPAAKFTTRSSIKDDTSEWAERRMKAQAEKKLATPTPRYNYIKLSEPVPKFKPAVLQMPSTSETKEN</sequence>
<organism evidence="8">
    <name type="scientific">Caenorhabditis elegans</name>
    <dbReference type="NCBI Taxonomy" id="6239"/>
    <lineage>
        <taxon>Eukaryota</taxon>
        <taxon>Metazoa</taxon>
        <taxon>Ecdysozoa</taxon>
        <taxon>Nematoda</taxon>
        <taxon>Chromadorea</taxon>
        <taxon>Rhabditida</taxon>
        <taxon>Rhabditina</taxon>
        <taxon>Rhabditomorpha</taxon>
        <taxon>Rhabditoidea</taxon>
        <taxon>Rhabditidae</taxon>
        <taxon>Peloderinae</taxon>
        <taxon>Caenorhabditis</taxon>
    </lineage>
</organism>
<name>SPDL1_CAEEL</name>
<gene>
    <name evidence="5 6 9" type="primary">spdl-1</name>
    <name evidence="9" type="ORF">C06A8.5</name>
</gene>
<comment type="function">
    <text evidence="2 3 4">Transient kinetochore component required for chromosome and spindle pole alignment and chromosome segregation during mitosis (PubMed:18765790, PubMed:18936247). Functions downstream of the RZZ complex to mediate kinetochore-microtubule attachments and nuclear envelope breakdown during cell division (PubMed:18765790, PubMed:18936247, PubMed:24231804). Required for kinetochore assembly and localizes the checkpoint proteins mdf-1 and mdf-2, dynein and dynactin to unattached kinetochores (PubMed:18765790, PubMed:18936247, PubMed:24231804). Dynein is believed to control the initial lateral interaction between the kinetochore and spindle microtubules and to facilitate the subsequent formation of end-on kinetochore-microtubule attachments mediated by the NDC80 complex (PubMed:24231804). Required for embryonic development (PubMed:18765790, PubMed:18936247).</text>
</comment>
<comment type="subunit">
    <text evidence="2 3">Interacts with Zwilch homolog zwl-1, a component of the RZZ complex (PubMed:18765790). Interacts with mdf-1 and mdf-2 (PubMed:18936247).</text>
</comment>
<comment type="subcellular location">
    <subcellularLocation>
        <location evidence="2 3">Chromosome</location>
        <location evidence="2 3">Centromere</location>
        <location evidence="2 3">Kinetochore</location>
    </subcellularLocation>
    <subcellularLocation>
        <location evidence="2">Cytoplasm</location>
        <location evidence="2">Cytoskeleton</location>
        <location evidence="2">Spindle pole</location>
    </subcellularLocation>
    <subcellularLocation>
        <location evidence="3">Cytoplasm</location>
        <location evidence="3">Cytoskeleton</location>
    </subcellularLocation>
    <text evidence="2 3">Localizes to microtubules during mitosis (PubMed:18936247). Recruited to the kinetochore by the RZZ complex (PubMed:18765790, PubMed:18936247). Localization to the kinetochore is also dependent on the NDC80 complex and bub-1 (PubMed:18765790). Localizes to the kinetochore during nuclear envelope breakdown and remains there until the metaphase-anaphase transition (PubMed:18765790, PubMed:18936247).</text>
</comment>
<comment type="disruption phenotype">
    <text evidence="2 3 4">Recessive embryonic lethality (PubMed:18936247). Hemizygous mutants are viable and survive through embryogenesis, but are either lethal at the larval stage of development or sterile (PubMed:18936247). The oocytes of sterile mutants have extra chromosomes and prematurely exit the prophase stage of meiosis which results in endomitosis (PubMed:18936247). RNAi-mediated knockdown results in embryonic lethality (PubMed:18765790, PubMed:18936247). RNA-mediated knockdown results in defective cell division characterized by irregular chromosome alignment and segregation, longer spindles during chromatid separation, premature spindle pole separation, defective formation of kinetochore-microtubule attachments and chromatin bridge formation during the anaphase stage of mitosis (PubMed:18765790, PubMed:18936247, PubMed:24231804).</text>
</comment>
<accession>Q17695</accession>
<dbReference type="EMBL" id="BX284602">
    <property type="protein sequence ID" value="CCD61463.1"/>
    <property type="molecule type" value="Genomic_DNA"/>
</dbReference>
<dbReference type="PIR" id="T15425">
    <property type="entry name" value="T15425"/>
</dbReference>
<dbReference type="RefSeq" id="NP_495637.1">
    <property type="nucleotide sequence ID" value="NM_063236.7"/>
</dbReference>
<dbReference type="SMR" id="Q17695"/>
<dbReference type="DIP" id="DIP-27271N"/>
<dbReference type="FunCoup" id="Q17695">
    <property type="interactions" value="69"/>
</dbReference>
<dbReference type="IntAct" id="Q17695">
    <property type="interactions" value="12"/>
</dbReference>
<dbReference type="MINT" id="Q17695"/>
<dbReference type="STRING" id="6239.C06A8.5.1"/>
<dbReference type="PaxDb" id="6239-C06A8.5"/>
<dbReference type="PeptideAtlas" id="Q17695"/>
<dbReference type="EnsemblMetazoa" id="C06A8.5.1">
    <property type="protein sequence ID" value="C06A8.5.1"/>
    <property type="gene ID" value="WBGene00015515"/>
</dbReference>
<dbReference type="GeneID" id="174256"/>
<dbReference type="KEGG" id="cel:CELE_C06A8.5"/>
<dbReference type="UCSC" id="C06A8.5">
    <property type="organism name" value="c. elegans"/>
</dbReference>
<dbReference type="AGR" id="WB:WBGene00015515"/>
<dbReference type="CTD" id="174256"/>
<dbReference type="WormBase" id="C06A8.5">
    <property type="protein sequence ID" value="CE02456"/>
    <property type="gene ID" value="WBGene00015515"/>
    <property type="gene designation" value="spdl-1"/>
</dbReference>
<dbReference type="eggNOG" id="ENOG502TFNV">
    <property type="taxonomic scope" value="Eukaryota"/>
</dbReference>
<dbReference type="HOGENOM" id="CLU_565283_0_0_1"/>
<dbReference type="InParanoid" id="Q17695"/>
<dbReference type="OMA" id="MFSEVID"/>
<dbReference type="OrthoDB" id="5797947at2759"/>
<dbReference type="PhylomeDB" id="Q17695"/>
<dbReference type="SignaLink" id="Q17695"/>
<dbReference type="PRO" id="PR:Q17695"/>
<dbReference type="Proteomes" id="UP000001940">
    <property type="component" value="Chromosome II"/>
</dbReference>
<dbReference type="Bgee" id="WBGene00015515">
    <property type="expression patterns" value="Expressed in germ line (C elegans) and 4 other cell types or tissues"/>
</dbReference>
<dbReference type="GO" id="GO:0005737">
    <property type="term" value="C:cytoplasm"/>
    <property type="evidence" value="ECO:0007669"/>
    <property type="project" value="UniProtKB-KW"/>
</dbReference>
<dbReference type="GO" id="GO:0000776">
    <property type="term" value="C:kinetochore"/>
    <property type="evidence" value="ECO:0000314"/>
    <property type="project" value="UniProtKB"/>
</dbReference>
<dbReference type="GO" id="GO:0005874">
    <property type="term" value="C:microtubule"/>
    <property type="evidence" value="ECO:0000314"/>
    <property type="project" value="WormBase"/>
</dbReference>
<dbReference type="GO" id="GO:0000922">
    <property type="term" value="C:spindle pole"/>
    <property type="evidence" value="ECO:0007669"/>
    <property type="project" value="UniProtKB-SubCell"/>
</dbReference>
<dbReference type="GO" id="GO:0090268">
    <property type="term" value="P:activation of mitotic cell cycle spindle assembly checkpoint"/>
    <property type="evidence" value="ECO:0000316"/>
    <property type="project" value="UniProtKB"/>
</dbReference>
<dbReference type="GO" id="GO:0008608">
    <property type="term" value="P:attachment of spindle microtubules to kinetochore"/>
    <property type="evidence" value="ECO:0000315"/>
    <property type="project" value="WormBase"/>
</dbReference>
<dbReference type="GO" id="GO:0051301">
    <property type="term" value="P:cell division"/>
    <property type="evidence" value="ECO:0007669"/>
    <property type="project" value="UniProtKB-KW"/>
</dbReference>
<dbReference type="GO" id="GO:0009792">
    <property type="term" value="P:embryo development ending in birth or egg hatching"/>
    <property type="evidence" value="ECO:0000315"/>
    <property type="project" value="WormBase"/>
</dbReference>
<dbReference type="GO" id="GO:0007079">
    <property type="term" value="P:mitotic chromosome movement towards spindle pole"/>
    <property type="evidence" value="ECO:0000315"/>
    <property type="project" value="UniProtKB"/>
</dbReference>
<dbReference type="GO" id="GO:0000070">
    <property type="term" value="P:mitotic sister chromatid segregation"/>
    <property type="evidence" value="ECO:0000315"/>
    <property type="project" value="WormBase"/>
</dbReference>
<dbReference type="GO" id="GO:0007094">
    <property type="term" value="P:mitotic spindle assembly checkpoint signaling"/>
    <property type="evidence" value="ECO:0000316"/>
    <property type="project" value="WormBase"/>
</dbReference>
<dbReference type="GO" id="GO:1905561">
    <property type="term" value="P:positive regulation of kinetochore assembly"/>
    <property type="evidence" value="ECO:0000316"/>
    <property type="project" value="UniProtKB"/>
</dbReference>
<dbReference type="GO" id="GO:1905824">
    <property type="term" value="P:positive regulation of mitotic sister chromatid arm separation"/>
    <property type="evidence" value="ECO:0000315"/>
    <property type="project" value="UniProtKB"/>
</dbReference>
<dbReference type="GO" id="GO:1901970">
    <property type="term" value="P:positive regulation of mitotic sister chromatid separation"/>
    <property type="evidence" value="ECO:0000315"/>
    <property type="project" value="UniProtKB"/>
</dbReference>
<dbReference type="GO" id="GO:0010696">
    <property type="term" value="P:positive regulation of mitotic spindle pole body separation"/>
    <property type="evidence" value="ECO:0000315"/>
    <property type="project" value="UniProtKB"/>
</dbReference>
<dbReference type="GO" id="GO:1905342">
    <property type="term" value="P:positive regulation of protein localization to kinetochore"/>
    <property type="evidence" value="ECO:0000316"/>
    <property type="project" value="UniProtKB"/>
</dbReference>
<dbReference type="GO" id="GO:0034501">
    <property type="term" value="P:protein localization to kinetochore"/>
    <property type="evidence" value="ECO:0000315"/>
    <property type="project" value="WormBase"/>
</dbReference>
<dbReference type="GO" id="GO:1902423">
    <property type="term" value="P:regulation of attachment of mitotic spindle microtubules to kinetochore"/>
    <property type="evidence" value="ECO:0000315"/>
    <property type="project" value="WormBase"/>
</dbReference>
<feature type="chain" id="PRO_0000438728" description="Spindly-like protein spdl-1" evidence="7">
    <location>
        <begin position="1"/>
        <end position="479"/>
    </location>
</feature>
<feature type="coiled-coil region" evidence="1">
    <location>
        <begin position="4"/>
        <end position="180"/>
    </location>
</feature>
<feature type="coiled-coil region" evidence="1">
    <location>
        <begin position="210"/>
        <end position="250"/>
    </location>
</feature>
<feature type="coiled-coil region" evidence="1">
    <location>
        <begin position="321"/>
        <end position="357"/>
    </location>
</feature>
<feature type="mutagenesis site" description="Abolishes dynein recruitment to kinetochores." evidence="4">
    <original>F</original>
    <variation>A</variation>
    <location>
        <position position="199"/>
    </location>
</feature>
<evidence type="ECO:0000255" key="1"/>
<evidence type="ECO:0000269" key="2">
    <source>
    </source>
</evidence>
<evidence type="ECO:0000269" key="3">
    <source>
    </source>
</evidence>
<evidence type="ECO:0000269" key="4">
    <source>
    </source>
</evidence>
<evidence type="ECO:0000303" key="5">
    <source>
    </source>
</evidence>
<evidence type="ECO:0000303" key="6">
    <source>
    </source>
</evidence>
<evidence type="ECO:0000305" key="7"/>
<evidence type="ECO:0000312" key="8">
    <source>
        <dbReference type="Proteomes" id="UP000001940"/>
    </source>
</evidence>
<evidence type="ECO:0000312" key="9">
    <source>
        <dbReference type="WormBase" id="C06A8.5"/>
    </source>
</evidence>